<feature type="chain" id="PRO_1000004367" description="UDP-N-acetylmuramate--L-alanine ligase">
    <location>
        <begin position="1"/>
        <end position="465"/>
    </location>
</feature>
<feature type="binding site" evidence="1">
    <location>
        <begin position="114"/>
        <end position="120"/>
    </location>
    <ligand>
        <name>ATP</name>
        <dbReference type="ChEBI" id="CHEBI:30616"/>
    </ligand>
</feature>
<gene>
    <name evidence="1" type="primary">murC</name>
    <name type="ordered locus">Meso_2006</name>
</gene>
<organism>
    <name type="scientific">Chelativorans sp. (strain BNC1)</name>
    <dbReference type="NCBI Taxonomy" id="266779"/>
    <lineage>
        <taxon>Bacteria</taxon>
        <taxon>Pseudomonadati</taxon>
        <taxon>Pseudomonadota</taxon>
        <taxon>Alphaproteobacteria</taxon>
        <taxon>Hyphomicrobiales</taxon>
        <taxon>Phyllobacteriaceae</taxon>
        <taxon>Chelativorans</taxon>
    </lineage>
</organism>
<reference key="1">
    <citation type="submission" date="2006-06" db="EMBL/GenBank/DDBJ databases">
        <title>Complete sequence of chromosome of Mesorhizobium sp. BNC1.</title>
        <authorList>
            <consortium name="US DOE Joint Genome Institute"/>
            <person name="Copeland A."/>
            <person name="Lucas S."/>
            <person name="Lapidus A."/>
            <person name="Barry K."/>
            <person name="Detter J.C."/>
            <person name="Glavina del Rio T."/>
            <person name="Hammon N."/>
            <person name="Israni S."/>
            <person name="Dalin E."/>
            <person name="Tice H."/>
            <person name="Pitluck S."/>
            <person name="Chertkov O."/>
            <person name="Brettin T."/>
            <person name="Bruce D."/>
            <person name="Han C."/>
            <person name="Tapia R."/>
            <person name="Gilna P."/>
            <person name="Schmutz J."/>
            <person name="Larimer F."/>
            <person name="Land M."/>
            <person name="Hauser L."/>
            <person name="Kyrpides N."/>
            <person name="Mikhailova N."/>
            <person name="Richardson P."/>
        </authorList>
    </citation>
    <scope>NUCLEOTIDE SEQUENCE [LARGE SCALE GENOMIC DNA]</scope>
    <source>
        <strain>BNC1</strain>
    </source>
</reference>
<comment type="function">
    <text evidence="1">Cell wall formation.</text>
</comment>
<comment type="catalytic activity">
    <reaction evidence="1">
        <text>UDP-N-acetyl-alpha-D-muramate + L-alanine + ATP = UDP-N-acetyl-alpha-D-muramoyl-L-alanine + ADP + phosphate + H(+)</text>
        <dbReference type="Rhea" id="RHEA:23372"/>
        <dbReference type="ChEBI" id="CHEBI:15378"/>
        <dbReference type="ChEBI" id="CHEBI:30616"/>
        <dbReference type="ChEBI" id="CHEBI:43474"/>
        <dbReference type="ChEBI" id="CHEBI:57972"/>
        <dbReference type="ChEBI" id="CHEBI:70757"/>
        <dbReference type="ChEBI" id="CHEBI:83898"/>
        <dbReference type="ChEBI" id="CHEBI:456216"/>
        <dbReference type="EC" id="6.3.2.8"/>
    </reaction>
</comment>
<comment type="pathway">
    <text evidence="1">Cell wall biogenesis; peptidoglycan biosynthesis.</text>
</comment>
<comment type="subcellular location">
    <subcellularLocation>
        <location evidence="1">Cytoplasm</location>
    </subcellularLocation>
</comment>
<comment type="similarity">
    <text evidence="1">Belongs to the MurCDEF family.</text>
</comment>
<accession>Q11GS6</accession>
<protein>
    <recommendedName>
        <fullName evidence="1">UDP-N-acetylmuramate--L-alanine ligase</fullName>
        <ecNumber evidence="1">6.3.2.8</ecNumber>
    </recommendedName>
    <alternativeName>
        <fullName evidence="1">UDP-N-acetylmuramoyl-L-alanine synthetase</fullName>
    </alternativeName>
</protein>
<proteinExistence type="inferred from homology"/>
<keyword id="KW-0067">ATP-binding</keyword>
<keyword id="KW-0131">Cell cycle</keyword>
<keyword id="KW-0132">Cell division</keyword>
<keyword id="KW-0133">Cell shape</keyword>
<keyword id="KW-0961">Cell wall biogenesis/degradation</keyword>
<keyword id="KW-0963">Cytoplasm</keyword>
<keyword id="KW-0436">Ligase</keyword>
<keyword id="KW-0547">Nucleotide-binding</keyword>
<keyword id="KW-0573">Peptidoglycan synthesis</keyword>
<dbReference type="EC" id="6.3.2.8" evidence="1"/>
<dbReference type="EMBL" id="CP000390">
    <property type="protein sequence ID" value="ABG63399.1"/>
    <property type="molecule type" value="Genomic_DNA"/>
</dbReference>
<dbReference type="SMR" id="Q11GS6"/>
<dbReference type="STRING" id="266779.Meso_2006"/>
<dbReference type="KEGG" id="mes:Meso_2006"/>
<dbReference type="eggNOG" id="COG0773">
    <property type="taxonomic scope" value="Bacteria"/>
</dbReference>
<dbReference type="HOGENOM" id="CLU_028104_2_2_5"/>
<dbReference type="OrthoDB" id="9804126at2"/>
<dbReference type="UniPathway" id="UPA00219"/>
<dbReference type="GO" id="GO:0005737">
    <property type="term" value="C:cytoplasm"/>
    <property type="evidence" value="ECO:0007669"/>
    <property type="project" value="UniProtKB-SubCell"/>
</dbReference>
<dbReference type="GO" id="GO:0005524">
    <property type="term" value="F:ATP binding"/>
    <property type="evidence" value="ECO:0007669"/>
    <property type="project" value="UniProtKB-UniRule"/>
</dbReference>
<dbReference type="GO" id="GO:0008763">
    <property type="term" value="F:UDP-N-acetylmuramate-L-alanine ligase activity"/>
    <property type="evidence" value="ECO:0007669"/>
    <property type="project" value="UniProtKB-UniRule"/>
</dbReference>
<dbReference type="GO" id="GO:0051301">
    <property type="term" value="P:cell division"/>
    <property type="evidence" value="ECO:0007669"/>
    <property type="project" value="UniProtKB-KW"/>
</dbReference>
<dbReference type="GO" id="GO:0071555">
    <property type="term" value="P:cell wall organization"/>
    <property type="evidence" value="ECO:0007669"/>
    <property type="project" value="UniProtKB-KW"/>
</dbReference>
<dbReference type="GO" id="GO:0009252">
    <property type="term" value="P:peptidoglycan biosynthetic process"/>
    <property type="evidence" value="ECO:0007669"/>
    <property type="project" value="UniProtKB-UniRule"/>
</dbReference>
<dbReference type="GO" id="GO:0008360">
    <property type="term" value="P:regulation of cell shape"/>
    <property type="evidence" value="ECO:0007669"/>
    <property type="project" value="UniProtKB-KW"/>
</dbReference>
<dbReference type="Gene3D" id="3.90.190.20">
    <property type="entry name" value="Mur ligase, C-terminal domain"/>
    <property type="match status" value="1"/>
</dbReference>
<dbReference type="Gene3D" id="3.40.1190.10">
    <property type="entry name" value="Mur-like, catalytic domain"/>
    <property type="match status" value="1"/>
</dbReference>
<dbReference type="Gene3D" id="3.40.50.720">
    <property type="entry name" value="NAD(P)-binding Rossmann-like Domain"/>
    <property type="match status" value="1"/>
</dbReference>
<dbReference type="HAMAP" id="MF_00046">
    <property type="entry name" value="MurC"/>
    <property type="match status" value="1"/>
</dbReference>
<dbReference type="InterPro" id="IPR036565">
    <property type="entry name" value="Mur-like_cat_sf"/>
</dbReference>
<dbReference type="InterPro" id="IPR004101">
    <property type="entry name" value="Mur_ligase_C"/>
</dbReference>
<dbReference type="InterPro" id="IPR036615">
    <property type="entry name" value="Mur_ligase_C_dom_sf"/>
</dbReference>
<dbReference type="InterPro" id="IPR013221">
    <property type="entry name" value="Mur_ligase_cen"/>
</dbReference>
<dbReference type="InterPro" id="IPR000713">
    <property type="entry name" value="Mur_ligase_N"/>
</dbReference>
<dbReference type="InterPro" id="IPR050061">
    <property type="entry name" value="MurCDEF_pg_biosynth"/>
</dbReference>
<dbReference type="InterPro" id="IPR005758">
    <property type="entry name" value="UDP-N-AcMur_Ala_ligase_MurC"/>
</dbReference>
<dbReference type="NCBIfam" id="TIGR01082">
    <property type="entry name" value="murC"/>
    <property type="match status" value="1"/>
</dbReference>
<dbReference type="PANTHER" id="PTHR43445:SF3">
    <property type="entry name" value="UDP-N-ACETYLMURAMATE--L-ALANINE LIGASE"/>
    <property type="match status" value="1"/>
</dbReference>
<dbReference type="PANTHER" id="PTHR43445">
    <property type="entry name" value="UDP-N-ACETYLMURAMATE--L-ALANINE LIGASE-RELATED"/>
    <property type="match status" value="1"/>
</dbReference>
<dbReference type="Pfam" id="PF01225">
    <property type="entry name" value="Mur_ligase"/>
    <property type="match status" value="1"/>
</dbReference>
<dbReference type="Pfam" id="PF02875">
    <property type="entry name" value="Mur_ligase_C"/>
    <property type="match status" value="1"/>
</dbReference>
<dbReference type="Pfam" id="PF08245">
    <property type="entry name" value="Mur_ligase_M"/>
    <property type="match status" value="1"/>
</dbReference>
<dbReference type="SUPFAM" id="SSF51984">
    <property type="entry name" value="MurCD N-terminal domain"/>
    <property type="match status" value="1"/>
</dbReference>
<dbReference type="SUPFAM" id="SSF53623">
    <property type="entry name" value="MurD-like peptide ligases, catalytic domain"/>
    <property type="match status" value="1"/>
</dbReference>
<dbReference type="SUPFAM" id="SSF53244">
    <property type="entry name" value="MurD-like peptide ligases, peptide-binding domain"/>
    <property type="match status" value="1"/>
</dbReference>
<sequence length="465" mass="50425">MKMPQTIGVVHFVGIGGIGMSGIAEVLHTLGYHVQGSDQAENANVVRLREKGIKAFIGHAAENLGDAEVVVISSAIKRDNPEYVAARERHLPIVRRAEMLAELMRFRQAVAIGGTHGKTTTTSMVAALLDAGGLDPTVINGGIINVYGTNARMGEGDWMVVEADESDGTFLKLPADIAVITNIDPEHLDHYGSFDKVREAFRQFVENVPFYGLGVMCIDHPEVQALVSRIEDRRVVTYGENLQADVRFENHRMENGHSVFDVIIRARKSDAVKAMRDLRLPMPGRHNVSNATAAIAVANELGMGEEAIRKGLAAFGGVKRRFTLTGTWNGISIFDDYGHHPVEIRAVLKAAREATSGRIIAIAQPHRYTRLRDLFDEFSACFNDADTVLVAPVYAAGESPIAGISSEALVASLRAAGHRDARFIPGPEAIAPIVREAANEGDFVVFLGAGNITQWAYALPKELCS</sequence>
<evidence type="ECO:0000255" key="1">
    <source>
        <dbReference type="HAMAP-Rule" id="MF_00046"/>
    </source>
</evidence>
<name>MURC_CHESB</name>